<dbReference type="EC" id="3.4.21.88" evidence="1"/>
<dbReference type="EMBL" id="AE016853">
    <property type="protein sequence ID" value="AAO56292.1"/>
    <property type="molecule type" value="Genomic_DNA"/>
</dbReference>
<dbReference type="RefSeq" id="NP_792597.1">
    <property type="nucleotide sequence ID" value="NC_004578.1"/>
</dbReference>
<dbReference type="SMR" id="Q881U0"/>
<dbReference type="STRING" id="223283.PSPTO_2792"/>
<dbReference type="MEROPS" id="S24.001"/>
<dbReference type="KEGG" id="pst:PSPTO_2792"/>
<dbReference type="PATRIC" id="fig|223283.9.peg.2850"/>
<dbReference type="eggNOG" id="COG1974">
    <property type="taxonomic scope" value="Bacteria"/>
</dbReference>
<dbReference type="HOGENOM" id="CLU_066192_45_3_6"/>
<dbReference type="OrthoDB" id="9802364at2"/>
<dbReference type="PhylomeDB" id="Q881U0"/>
<dbReference type="Proteomes" id="UP000002515">
    <property type="component" value="Chromosome"/>
</dbReference>
<dbReference type="GO" id="GO:0003677">
    <property type="term" value="F:DNA binding"/>
    <property type="evidence" value="ECO:0007669"/>
    <property type="project" value="UniProtKB-UniRule"/>
</dbReference>
<dbReference type="GO" id="GO:0004252">
    <property type="term" value="F:serine-type endopeptidase activity"/>
    <property type="evidence" value="ECO:0007669"/>
    <property type="project" value="UniProtKB-UniRule"/>
</dbReference>
<dbReference type="GO" id="GO:0006281">
    <property type="term" value="P:DNA repair"/>
    <property type="evidence" value="ECO:0007669"/>
    <property type="project" value="UniProtKB-UniRule"/>
</dbReference>
<dbReference type="GO" id="GO:0006260">
    <property type="term" value="P:DNA replication"/>
    <property type="evidence" value="ECO:0007669"/>
    <property type="project" value="UniProtKB-UniRule"/>
</dbReference>
<dbReference type="GO" id="GO:0045892">
    <property type="term" value="P:negative regulation of DNA-templated transcription"/>
    <property type="evidence" value="ECO:0007669"/>
    <property type="project" value="UniProtKB-UniRule"/>
</dbReference>
<dbReference type="GO" id="GO:0006508">
    <property type="term" value="P:proteolysis"/>
    <property type="evidence" value="ECO:0007669"/>
    <property type="project" value="InterPro"/>
</dbReference>
<dbReference type="GO" id="GO:0009432">
    <property type="term" value="P:SOS response"/>
    <property type="evidence" value="ECO:0007669"/>
    <property type="project" value="UniProtKB-UniRule"/>
</dbReference>
<dbReference type="CDD" id="cd06529">
    <property type="entry name" value="S24_LexA-like"/>
    <property type="match status" value="1"/>
</dbReference>
<dbReference type="FunFam" id="1.10.10.10:FF:000009">
    <property type="entry name" value="LexA repressor"/>
    <property type="match status" value="1"/>
</dbReference>
<dbReference type="FunFam" id="2.10.109.10:FF:000001">
    <property type="entry name" value="LexA repressor"/>
    <property type="match status" value="1"/>
</dbReference>
<dbReference type="Gene3D" id="2.10.109.10">
    <property type="entry name" value="Umud Fragment, subunit A"/>
    <property type="match status" value="1"/>
</dbReference>
<dbReference type="Gene3D" id="1.10.10.10">
    <property type="entry name" value="Winged helix-like DNA-binding domain superfamily/Winged helix DNA-binding domain"/>
    <property type="match status" value="1"/>
</dbReference>
<dbReference type="HAMAP" id="MF_00015">
    <property type="entry name" value="LexA"/>
    <property type="match status" value="1"/>
</dbReference>
<dbReference type="InterPro" id="IPR006200">
    <property type="entry name" value="LexA"/>
</dbReference>
<dbReference type="InterPro" id="IPR039418">
    <property type="entry name" value="LexA-like"/>
</dbReference>
<dbReference type="InterPro" id="IPR036286">
    <property type="entry name" value="LexA/Signal_pep-like_sf"/>
</dbReference>
<dbReference type="InterPro" id="IPR006199">
    <property type="entry name" value="LexA_DNA-bd_dom"/>
</dbReference>
<dbReference type="InterPro" id="IPR050077">
    <property type="entry name" value="LexA_repressor"/>
</dbReference>
<dbReference type="InterPro" id="IPR006197">
    <property type="entry name" value="Peptidase_S24_LexA"/>
</dbReference>
<dbReference type="InterPro" id="IPR015927">
    <property type="entry name" value="Peptidase_S24_S26A/B/C"/>
</dbReference>
<dbReference type="InterPro" id="IPR036388">
    <property type="entry name" value="WH-like_DNA-bd_sf"/>
</dbReference>
<dbReference type="InterPro" id="IPR036390">
    <property type="entry name" value="WH_DNA-bd_sf"/>
</dbReference>
<dbReference type="NCBIfam" id="TIGR00498">
    <property type="entry name" value="lexA"/>
    <property type="match status" value="1"/>
</dbReference>
<dbReference type="PANTHER" id="PTHR33516">
    <property type="entry name" value="LEXA REPRESSOR"/>
    <property type="match status" value="1"/>
</dbReference>
<dbReference type="PANTHER" id="PTHR33516:SF2">
    <property type="entry name" value="LEXA REPRESSOR-RELATED"/>
    <property type="match status" value="1"/>
</dbReference>
<dbReference type="Pfam" id="PF01726">
    <property type="entry name" value="LexA_DNA_bind"/>
    <property type="match status" value="1"/>
</dbReference>
<dbReference type="Pfam" id="PF00717">
    <property type="entry name" value="Peptidase_S24"/>
    <property type="match status" value="1"/>
</dbReference>
<dbReference type="PRINTS" id="PR00726">
    <property type="entry name" value="LEXASERPTASE"/>
</dbReference>
<dbReference type="SUPFAM" id="SSF51306">
    <property type="entry name" value="LexA/Signal peptidase"/>
    <property type="match status" value="1"/>
</dbReference>
<dbReference type="SUPFAM" id="SSF46785">
    <property type="entry name" value="Winged helix' DNA-binding domain"/>
    <property type="match status" value="1"/>
</dbReference>
<proteinExistence type="inferred from homology"/>
<name>LEXA2_PSESM</name>
<sequence length="202" mass="22181">MSTLSPRRSAILTFIRDRIAQQGQSPSLAEISEAFGFASRSVARKHIVALTEAGLIEVVAHQARGIRLLNSEPRPELLEIPVLGRVAAGAPIGPDLDIHTTLHLDRSTFTRVPDYLLRVQGDSMIEDGILDGDLVGVHRNPQASDGQIVVARLEGEVTIKRLQHRGDQLHLLPRNPAYQPIIVTPDQDFAIEGVFCGLVRRE</sequence>
<feature type="chain" id="PRO_0000170073" description="LexA repressor 2">
    <location>
        <begin position="1"/>
        <end position="202"/>
    </location>
</feature>
<feature type="DNA-binding region" description="H-T-H motif" evidence="1">
    <location>
        <begin position="28"/>
        <end position="48"/>
    </location>
</feature>
<feature type="active site" description="For autocatalytic cleavage activity" evidence="1">
    <location>
        <position position="123"/>
    </location>
</feature>
<feature type="active site" description="For autocatalytic cleavage activity" evidence="1">
    <location>
        <position position="160"/>
    </location>
</feature>
<feature type="site" description="Cleavage; by autolysis" evidence="1">
    <location>
        <begin position="88"/>
        <end position="89"/>
    </location>
</feature>
<accession>Q881U0</accession>
<reference key="1">
    <citation type="journal article" date="2003" name="Proc. Natl. Acad. Sci. U.S.A.">
        <title>The complete genome sequence of the Arabidopsis and tomato pathogen Pseudomonas syringae pv. tomato DC3000.</title>
        <authorList>
            <person name="Buell C.R."/>
            <person name="Joardar V."/>
            <person name="Lindeberg M."/>
            <person name="Selengut J."/>
            <person name="Paulsen I.T."/>
            <person name="Gwinn M.L."/>
            <person name="Dodson R.J."/>
            <person name="DeBoy R.T."/>
            <person name="Durkin A.S."/>
            <person name="Kolonay J.F."/>
            <person name="Madupu R."/>
            <person name="Daugherty S.C."/>
            <person name="Brinkac L.M."/>
            <person name="Beanan M.J."/>
            <person name="Haft D.H."/>
            <person name="Nelson W.C."/>
            <person name="Davidsen T.M."/>
            <person name="Zafar N."/>
            <person name="Zhou L."/>
            <person name="Liu J."/>
            <person name="Yuan Q."/>
            <person name="Khouri H.M."/>
            <person name="Fedorova N.B."/>
            <person name="Tran B."/>
            <person name="Russell D."/>
            <person name="Berry K.J."/>
            <person name="Utterback T.R."/>
            <person name="Van Aken S.E."/>
            <person name="Feldblyum T.V."/>
            <person name="D'Ascenzo M."/>
            <person name="Deng W.-L."/>
            <person name="Ramos A.R."/>
            <person name="Alfano J.R."/>
            <person name="Cartinhour S."/>
            <person name="Chatterjee A.K."/>
            <person name="Delaney T.P."/>
            <person name="Lazarowitz S.G."/>
            <person name="Martin G.B."/>
            <person name="Schneider D.J."/>
            <person name="Tang X."/>
            <person name="Bender C.L."/>
            <person name="White O."/>
            <person name="Fraser C.M."/>
            <person name="Collmer A."/>
        </authorList>
    </citation>
    <scope>NUCLEOTIDE SEQUENCE [LARGE SCALE GENOMIC DNA]</scope>
    <source>
        <strain>ATCC BAA-871 / DC3000</strain>
    </source>
</reference>
<gene>
    <name evidence="1" type="primary">lexA2</name>
    <name type="synonym">lexA-1</name>
    <name type="ordered locus">PSPTO_2792</name>
</gene>
<comment type="function">
    <text evidence="1">Represses a number of genes involved in the response to DNA damage (SOS response), including recA and lexA. In the presence of single-stranded DNA, RecA interacts with LexA causing an autocatalytic cleavage which disrupts the DNA-binding part of LexA, leading to derepression of the SOS regulon and eventually DNA repair.</text>
</comment>
<comment type="catalytic activity">
    <reaction evidence="1">
        <text>Hydrolysis of Ala-|-Gly bond in repressor LexA.</text>
        <dbReference type="EC" id="3.4.21.88"/>
    </reaction>
</comment>
<comment type="subunit">
    <text evidence="1">Homodimer.</text>
</comment>
<comment type="similarity">
    <text evidence="1">Belongs to the peptidase S24 family.</text>
</comment>
<organism>
    <name type="scientific">Pseudomonas syringae pv. tomato (strain ATCC BAA-871 / DC3000)</name>
    <dbReference type="NCBI Taxonomy" id="223283"/>
    <lineage>
        <taxon>Bacteria</taxon>
        <taxon>Pseudomonadati</taxon>
        <taxon>Pseudomonadota</taxon>
        <taxon>Gammaproteobacteria</taxon>
        <taxon>Pseudomonadales</taxon>
        <taxon>Pseudomonadaceae</taxon>
        <taxon>Pseudomonas</taxon>
    </lineage>
</organism>
<evidence type="ECO:0000255" key="1">
    <source>
        <dbReference type="HAMAP-Rule" id="MF_00015"/>
    </source>
</evidence>
<keyword id="KW-0068">Autocatalytic cleavage</keyword>
<keyword id="KW-0227">DNA damage</keyword>
<keyword id="KW-0234">DNA repair</keyword>
<keyword id="KW-0235">DNA replication</keyword>
<keyword id="KW-0238">DNA-binding</keyword>
<keyword id="KW-0378">Hydrolase</keyword>
<keyword id="KW-1185">Reference proteome</keyword>
<keyword id="KW-0678">Repressor</keyword>
<keyword id="KW-0742">SOS response</keyword>
<keyword id="KW-0804">Transcription</keyword>
<keyword id="KW-0805">Transcription regulation</keyword>
<protein>
    <recommendedName>
        <fullName evidence="1">LexA repressor 2</fullName>
        <ecNumber evidence="1">3.4.21.88</ecNumber>
    </recommendedName>
</protein>